<feature type="chain" id="PRO_0000285527" description="Putative homeobox protein NANOG2">
    <location>
        <begin position="1"/>
        <end position="232"/>
    </location>
</feature>
<feature type="repeat" description="1">
    <location>
        <begin position="123"/>
        <end position="127"/>
    </location>
</feature>
<feature type="repeat" description="2">
    <location>
        <begin position="128"/>
        <end position="132"/>
    </location>
</feature>
<feature type="repeat" description="3">
    <location>
        <begin position="133"/>
        <end position="137"/>
    </location>
</feature>
<feature type="repeat" description="4">
    <location>
        <begin position="143"/>
        <end position="147"/>
    </location>
</feature>
<feature type="repeat" description="5">
    <location>
        <begin position="148"/>
        <end position="152"/>
    </location>
</feature>
<feature type="repeat" description="6">
    <location>
        <begin position="153"/>
        <end position="157"/>
    </location>
</feature>
<feature type="repeat" description="7">
    <location>
        <begin position="158"/>
        <end position="162"/>
    </location>
</feature>
<feature type="repeat" description="8">
    <location>
        <begin position="163"/>
        <end position="167"/>
    </location>
</feature>
<feature type="region of interest" description="Disordered" evidence="3">
    <location>
        <begin position="1"/>
        <end position="39"/>
    </location>
</feature>
<feature type="region of interest" description="8 X repeats starting with a Trp in each unit">
    <location>
        <begin position="123"/>
        <end position="167"/>
    </location>
</feature>
<feature type="region of interest" description="Sufficient for transactivation activity" evidence="1">
    <location>
        <begin position="123"/>
        <end position="167"/>
    </location>
</feature>
<feature type="region of interest" description="Sufficient for strong transactivation activity" evidence="1">
    <location>
        <begin position="168"/>
        <end position="232"/>
    </location>
</feature>
<feature type="compositionally biased region" description="Basic and acidic residues" evidence="3">
    <location>
        <begin position="1"/>
        <end position="10"/>
    </location>
</feature>
<feature type="compositionally biased region" description="Polar residues" evidence="3">
    <location>
        <begin position="11"/>
        <end position="25"/>
    </location>
</feature>
<feature type="compositionally biased region" description="Basic and acidic residues" evidence="3">
    <location>
        <begin position="26"/>
        <end position="35"/>
    </location>
</feature>
<evidence type="ECO:0000250" key="1"/>
<evidence type="ECO:0000255" key="2">
    <source>
        <dbReference type="PROSITE-ProRule" id="PRU00108"/>
    </source>
</evidence>
<evidence type="ECO:0000256" key="3">
    <source>
        <dbReference type="SAM" id="MobiDB-lite"/>
    </source>
</evidence>
<evidence type="ECO:0000305" key="4"/>
<comment type="function">
    <text evidence="1">Probable transcriptional regulator.</text>
</comment>
<comment type="subcellular location">
    <subcellularLocation>
        <location evidence="2">Nucleus</location>
    </subcellularLocation>
</comment>
<comment type="similarity">
    <text evidence="4">Belongs to the Nanog homeobox family.</text>
</comment>
<comment type="caution">
    <text evidence="4">Could be the product of a pseudogene.</text>
</comment>
<name>NANG2_PANTR</name>
<accession>A2T763</accession>
<proteinExistence type="uncertain"/>
<dbReference type="EMBL" id="DQ977380">
    <property type="protein sequence ID" value="ABM92018.1"/>
    <property type="molecule type" value="Genomic_DNA"/>
</dbReference>
<dbReference type="SMR" id="A2T763"/>
<dbReference type="FunCoup" id="A2T763">
    <property type="interactions" value="34"/>
</dbReference>
<dbReference type="InParanoid" id="A2T763"/>
<dbReference type="Proteomes" id="UP000002277">
    <property type="component" value="Unplaced"/>
</dbReference>
<dbReference type="GO" id="GO:0005634">
    <property type="term" value="C:nucleus"/>
    <property type="evidence" value="ECO:0007669"/>
    <property type="project" value="UniProtKB-SubCell"/>
</dbReference>
<dbReference type="GO" id="GO:0000981">
    <property type="term" value="F:DNA-binding transcription factor activity, RNA polymerase II-specific"/>
    <property type="evidence" value="ECO:0000318"/>
    <property type="project" value="GO_Central"/>
</dbReference>
<dbReference type="GO" id="GO:0000978">
    <property type="term" value="F:RNA polymerase II cis-regulatory region sequence-specific DNA binding"/>
    <property type="evidence" value="ECO:0000318"/>
    <property type="project" value="GO_Central"/>
</dbReference>
<dbReference type="GO" id="GO:0030154">
    <property type="term" value="P:cell differentiation"/>
    <property type="evidence" value="ECO:0000318"/>
    <property type="project" value="GO_Central"/>
</dbReference>
<dbReference type="GO" id="GO:0006357">
    <property type="term" value="P:regulation of transcription by RNA polymerase II"/>
    <property type="evidence" value="ECO:0000318"/>
    <property type="project" value="GO_Central"/>
</dbReference>
<dbReference type="GO" id="GO:0019827">
    <property type="term" value="P:stem cell population maintenance"/>
    <property type="evidence" value="ECO:0000318"/>
    <property type="project" value="GO_Central"/>
</dbReference>
<dbReference type="CDD" id="cd00086">
    <property type="entry name" value="homeodomain"/>
    <property type="match status" value="1"/>
</dbReference>
<dbReference type="FunFam" id="1.10.10.60:FF:000203">
    <property type="entry name" value="Nanog homeobox transcription factor"/>
    <property type="match status" value="1"/>
</dbReference>
<dbReference type="Gene3D" id="1.10.10.60">
    <property type="entry name" value="Homeodomain-like"/>
    <property type="match status" value="1"/>
</dbReference>
<dbReference type="InterPro" id="IPR050460">
    <property type="entry name" value="Distal-less_Homeobox_TF"/>
</dbReference>
<dbReference type="InterPro" id="IPR001356">
    <property type="entry name" value="HD"/>
</dbReference>
<dbReference type="InterPro" id="IPR017970">
    <property type="entry name" value="Homeobox_CS"/>
</dbReference>
<dbReference type="InterPro" id="IPR009057">
    <property type="entry name" value="Homeodomain-like_sf"/>
</dbReference>
<dbReference type="PANTHER" id="PTHR24327">
    <property type="entry name" value="HOMEOBOX PROTEIN"/>
    <property type="match status" value="1"/>
</dbReference>
<dbReference type="PANTHER" id="PTHR24327:SF79">
    <property type="entry name" value="HOMEOBOX PROTEIN NANOG-RELATED"/>
    <property type="match status" value="1"/>
</dbReference>
<dbReference type="Pfam" id="PF00046">
    <property type="entry name" value="Homeodomain"/>
    <property type="match status" value="1"/>
</dbReference>
<dbReference type="SMART" id="SM00389">
    <property type="entry name" value="HOX"/>
    <property type="match status" value="1"/>
</dbReference>
<dbReference type="SUPFAM" id="SSF46689">
    <property type="entry name" value="Homeodomain-like"/>
    <property type="match status" value="1"/>
</dbReference>
<dbReference type="PROSITE" id="PS00027">
    <property type="entry name" value="HOMEOBOX_1"/>
    <property type="match status" value="1"/>
</dbReference>
<dbReference type="PROSITE" id="PS50071">
    <property type="entry name" value="HOMEOBOX_2"/>
    <property type="match status" value="1"/>
</dbReference>
<keyword id="KW-0238">DNA-binding</keyword>
<keyword id="KW-0371">Homeobox</keyword>
<keyword id="KW-0539">Nucleus</keyword>
<keyword id="KW-1185">Reference proteome</keyword>
<keyword id="KW-0677">Repeat</keyword>
<keyword id="KW-0804">Transcription</keyword>
<keyword id="KW-0805">Transcription regulation</keyword>
<organism>
    <name type="scientific">Pan troglodytes</name>
    <name type="common">Chimpanzee</name>
    <dbReference type="NCBI Taxonomy" id="9598"/>
    <lineage>
        <taxon>Eukaryota</taxon>
        <taxon>Metazoa</taxon>
        <taxon>Chordata</taxon>
        <taxon>Craniata</taxon>
        <taxon>Vertebrata</taxon>
        <taxon>Euteleostomi</taxon>
        <taxon>Mammalia</taxon>
        <taxon>Eutheria</taxon>
        <taxon>Euarchontoglires</taxon>
        <taxon>Primates</taxon>
        <taxon>Haplorrhini</taxon>
        <taxon>Catarrhini</taxon>
        <taxon>Hominidae</taxon>
        <taxon>Pan</taxon>
    </lineage>
</organism>
<protein>
    <recommendedName>
        <fullName>Putative homeobox protein NANOG2</fullName>
    </recommendedName>
</protein>
<reference key="1">
    <citation type="submission" date="2006-08" db="EMBL/GenBank/DDBJ databases">
        <title>Positive selection in transcription factor genes on the human lineage.</title>
        <authorList>
            <person name="Nickel G.C."/>
            <person name="Tefft D.L."/>
            <person name="Trevarthen K."/>
            <person name="Funt J."/>
            <person name="Adams M.D."/>
        </authorList>
    </citation>
    <scope>NUCLEOTIDE SEQUENCE [GENOMIC DNA]</scope>
</reference>
<sequence>MDLPIEDSHDSSTSPKGKQPTTAEKSATKKEDKVPVKKQKTRTVFSSTQLCVLNDRFQRQKYLSLQQMQELSNILNLSYKQVKTWFQNQRMKSKRWQKNNWLKNSNGVTQGCLVNPTGNLPMWSNQTWNNSIWSNETQNIQSWSNHSWNTQTWCTQSWNNQAWNSPFYNCGEESLQSCMQFQPNSPASDLEAALEAAGEGLNVIQQTARYFSTPQTMDLFLNYSTNMQPEDV</sequence>
<gene>
    <name type="primary">NANOGP1</name>
    <name type="synonym">NANOG2</name>
</gene>